<reference key="1">
    <citation type="journal article" date="2005" name="Nature">
        <title>Sequencing of Aspergillus nidulans and comparative analysis with A. fumigatus and A. oryzae.</title>
        <authorList>
            <person name="Galagan J.E."/>
            <person name="Calvo S.E."/>
            <person name="Cuomo C."/>
            <person name="Ma L.-J."/>
            <person name="Wortman J.R."/>
            <person name="Batzoglou S."/>
            <person name="Lee S.-I."/>
            <person name="Bastuerkmen M."/>
            <person name="Spevak C.C."/>
            <person name="Clutterbuck J."/>
            <person name="Kapitonov V."/>
            <person name="Jurka J."/>
            <person name="Scazzocchio C."/>
            <person name="Farman M.L."/>
            <person name="Butler J."/>
            <person name="Purcell S."/>
            <person name="Harris S."/>
            <person name="Braus G.H."/>
            <person name="Draht O."/>
            <person name="Busch S."/>
            <person name="D'Enfert C."/>
            <person name="Bouchier C."/>
            <person name="Goldman G.H."/>
            <person name="Bell-Pedersen D."/>
            <person name="Griffiths-Jones S."/>
            <person name="Doonan J.H."/>
            <person name="Yu J."/>
            <person name="Vienken K."/>
            <person name="Pain A."/>
            <person name="Freitag M."/>
            <person name="Selker E.U."/>
            <person name="Archer D.B."/>
            <person name="Penalva M.A."/>
            <person name="Oakley B.R."/>
            <person name="Momany M."/>
            <person name="Tanaka T."/>
            <person name="Kumagai T."/>
            <person name="Asai K."/>
            <person name="Machida M."/>
            <person name="Nierman W.C."/>
            <person name="Denning D.W."/>
            <person name="Caddick M.X."/>
            <person name="Hynes M."/>
            <person name="Paoletti M."/>
            <person name="Fischer R."/>
            <person name="Miller B.L."/>
            <person name="Dyer P.S."/>
            <person name="Sachs M.S."/>
            <person name="Osmani S.A."/>
            <person name="Birren B.W."/>
        </authorList>
    </citation>
    <scope>NUCLEOTIDE SEQUENCE [LARGE SCALE GENOMIC DNA]</scope>
    <source>
        <strain>FGSC A4 / ATCC 38163 / CBS 112.46 / NRRL 194 / M139</strain>
    </source>
</reference>
<reference key="2">
    <citation type="journal article" date="2009" name="Fungal Genet. Biol.">
        <title>The 2008 update of the Aspergillus nidulans genome annotation: a community effort.</title>
        <authorList>
            <person name="Wortman J.R."/>
            <person name="Gilsenan J.M."/>
            <person name="Joardar V."/>
            <person name="Deegan J."/>
            <person name="Clutterbuck J."/>
            <person name="Andersen M.R."/>
            <person name="Archer D."/>
            <person name="Bencina M."/>
            <person name="Braus G."/>
            <person name="Coutinho P."/>
            <person name="von Dohren H."/>
            <person name="Doonan J."/>
            <person name="Driessen A.J."/>
            <person name="Durek P."/>
            <person name="Espeso E."/>
            <person name="Fekete E."/>
            <person name="Flipphi M."/>
            <person name="Estrada C.G."/>
            <person name="Geysens S."/>
            <person name="Goldman G."/>
            <person name="de Groot P.W."/>
            <person name="Hansen K."/>
            <person name="Harris S.D."/>
            <person name="Heinekamp T."/>
            <person name="Helmstaedt K."/>
            <person name="Henrissat B."/>
            <person name="Hofmann G."/>
            <person name="Homan T."/>
            <person name="Horio T."/>
            <person name="Horiuchi H."/>
            <person name="James S."/>
            <person name="Jones M."/>
            <person name="Karaffa L."/>
            <person name="Karanyi Z."/>
            <person name="Kato M."/>
            <person name="Keller N."/>
            <person name="Kelly D.E."/>
            <person name="Kiel J.A."/>
            <person name="Kim J.M."/>
            <person name="van der Klei I.J."/>
            <person name="Klis F.M."/>
            <person name="Kovalchuk A."/>
            <person name="Krasevec N."/>
            <person name="Kubicek C.P."/>
            <person name="Liu B."/>
            <person name="Maccabe A."/>
            <person name="Meyer V."/>
            <person name="Mirabito P."/>
            <person name="Miskei M."/>
            <person name="Mos M."/>
            <person name="Mullins J."/>
            <person name="Nelson D.R."/>
            <person name="Nielsen J."/>
            <person name="Oakley B.R."/>
            <person name="Osmani S.A."/>
            <person name="Pakula T."/>
            <person name="Paszewski A."/>
            <person name="Paulsen I."/>
            <person name="Pilsyk S."/>
            <person name="Pocsi I."/>
            <person name="Punt P.J."/>
            <person name="Ram A.F."/>
            <person name="Ren Q."/>
            <person name="Robellet X."/>
            <person name="Robson G."/>
            <person name="Seiboth B."/>
            <person name="van Solingen P."/>
            <person name="Specht T."/>
            <person name="Sun J."/>
            <person name="Taheri-Talesh N."/>
            <person name="Takeshita N."/>
            <person name="Ussery D."/>
            <person name="vanKuyk P.A."/>
            <person name="Visser H."/>
            <person name="van de Vondervoort P.J."/>
            <person name="de Vries R.P."/>
            <person name="Walton J."/>
            <person name="Xiang X."/>
            <person name="Xiong Y."/>
            <person name="Zeng A.P."/>
            <person name="Brandt B.W."/>
            <person name="Cornell M.J."/>
            <person name="van den Hondel C.A."/>
            <person name="Visser J."/>
            <person name="Oliver S.G."/>
            <person name="Turner G."/>
        </authorList>
    </citation>
    <scope>GENOME REANNOTATION</scope>
    <source>
        <strain>FGSC A4 / ATCC 38163 / CBS 112.46 / NRRL 194 / M139</strain>
    </source>
</reference>
<comment type="function">
    <text evidence="1">3' to 5' exoribonuclease required for proper 3' end maturation of MRP RNA and of the U5L snRNA.</text>
</comment>
<comment type="subcellular location">
    <subcellularLocation>
        <location evidence="1">Cytoplasm</location>
    </subcellularLocation>
    <subcellularLocation>
        <location evidence="1">Nucleus</location>
    </subcellularLocation>
</comment>
<comment type="similarity">
    <text evidence="3">Belongs to the REXO1/REXO3 family.</text>
</comment>
<comment type="sequence caution" evidence="3">
    <conflict type="erroneous gene model prediction">
        <sequence resource="EMBL-CDS" id="EAA61091"/>
    </conflict>
</comment>
<name>REXO3_EMENI</name>
<keyword id="KW-0963">Cytoplasm</keyword>
<keyword id="KW-0269">Exonuclease</keyword>
<keyword id="KW-0378">Hydrolase</keyword>
<keyword id="KW-0540">Nuclease</keyword>
<keyword id="KW-0539">Nucleus</keyword>
<keyword id="KW-1185">Reference proteome</keyword>
<keyword id="KW-0698">rRNA processing</keyword>
<proteinExistence type="inferred from homology"/>
<evidence type="ECO:0000250" key="1"/>
<evidence type="ECO:0000256" key="2">
    <source>
        <dbReference type="SAM" id="MobiDB-lite"/>
    </source>
</evidence>
<evidence type="ECO:0000305" key="3"/>
<organism>
    <name type="scientific">Emericella nidulans (strain FGSC A4 / ATCC 38163 / CBS 112.46 / NRRL 194 / M139)</name>
    <name type="common">Aspergillus nidulans</name>
    <dbReference type="NCBI Taxonomy" id="227321"/>
    <lineage>
        <taxon>Eukaryota</taxon>
        <taxon>Fungi</taxon>
        <taxon>Dikarya</taxon>
        <taxon>Ascomycota</taxon>
        <taxon>Pezizomycotina</taxon>
        <taxon>Eurotiomycetes</taxon>
        <taxon>Eurotiomycetidae</taxon>
        <taxon>Eurotiales</taxon>
        <taxon>Aspergillaceae</taxon>
        <taxon>Aspergillus</taxon>
        <taxon>Aspergillus subgen. Nidulantes</taxon>
    </lineage>
</organism>
<gene>
    <name type="primary">rex3</name>
    <name type="ORF">AN5013</name>
</gene>
<protein>
    <recommendedName>
        <fullName>RNA exonuclease 3</fullName>
        <ecNumber>3.1.-.-</ecNumber>
    </recommendedName>
</protein>
<accession>Q5B367</accession>
<accession>C8V8L1</accession>
<feature type="chain" id="PRO_0000120933" description="RNA exonuclease 3">
    <location>
        <begin position="1"/>
        <end position="638"/>
    </location>
</feature>
<feature type="domain" description="Exonuclease">
    <location>
        <begin position="408"/>
        <end position="584"/>
    </location>
</feature>
<feature type="region of interest" description="Disordered" evidence="2">
    <location>
        <begin position="37"/>
        <end position="136"/>
    </location>
</feature>
<feature type="region of interest" description="Disordered" evidence="2">
    <location>
        <begin position="612"/>
        <end position="638"/>
    </location>
</feature>
<feature type="compositionally biased region" description="Basic and acidic residues" evidence="2">
    <location>
        <begin position="55"/>
        <end position="76"/>
    </location>
</feature>
<feature type="compositionally biased region" description="Polar residues" evidence="2">
    <location>
        <begin position="77"/>
        <end position="111"/>
    </location>
</feature>
<feature type="compositionally biased region" description="Polar residues" evidence="2">
    <location>
        <begin position="612"/>
        <end position="622"/>
    </location>
</feature>
<sequence>MFAPLGLFRDIPCPQREECSLIACLFSHRDLNSAPAAQDQVLEQKEPAKLPPKRLKLEPRPEAKETPKDDLRHVSDSGRSTPVKKTTAPATNAENISPVSRQPNIPKNTATAPIKRELNANTGSSIPPRRAPKEALNPRMIQKSPATYNVRMAILKKLHGTLCSLNDQLAKDKALEDKCLILTPDELITMALDEEEKVAKESPTVYSNVVKLRIVKLSRMSKEDWAKELKDYLNKKYYKIKAEPVQKEPKPFKTDLSVEEEIAVASQLITPLQGLEDFGYVTRVPTAEEIEIAKRGVAEAKGWEKCERCNARFQVFPGRREDGTLTSGGTCTYHPGKSFYPPRKKTDHITGTMREGYFTCCNQKLGESSGCTTGATHVYKVSETKRLASILQFEKTPENPDLHNPTPICFDCEMGYTTLGMELIRLTAVSWPEGKKVLDVLVRPLGEVLDLNSRFSGVFPEHYTNALPYSTAPTKSSAPSSSSPSQLQLVSSPAAARTLLFNLLTPSTPLIGHAIDNDLNACRIIHPTVIDTAILYPHPGGGLPYRMSLRTLAKKHLDREIQTGGASGKQGHDSVEDALATGDLVRVKAGLVWGRLKEKGWIVEEGRLVAPDSSSNTVSMQTKLGEGAGAKRAREGTS</sequence>
<dbReference type="EC" id="3.1.-.-"/>
<dbReference type="EMBL" id="AACD01000084">
    <property type="protein sequence ID" value="EAA61091.1"/>
    <property type="status" value="ALT_SEQ"/>
    <property type="molecule type" value="Genomic_DNA"/>
</dbReference>
<dbReference type="EMBL" id="BN001303">
    <property type="protein sequence ID" value="CBF76279.1"/>
    <property type="molecule type" value="Genomic_DNA"/>
</dbReference>
<dbReference type="RefSeq" id="XP_662617.1">
    <property type="nucleotide sequence ID" value="XM_657525.1"/>
</dbReference>
<dbReference type="SMR" id="Q5B367"/>
<dbReference type="FunCoup" id="Q5B367">
    <property type="interactions" value="68"/>
</dbReference>
<dbReference type="STRING" id="227321.Q5B367"/>
<dbReference type="EnsemblFungi" id="CBF76279">
    <property type="protein sequence ID" value="CBF76279"/>
    <property type="gene ID" value="ANIA_05013"/>
</dbReference>
<dbReference type="VEuPathDB" id="FungiDB:AN5013"/>
<dbReference type="eggNOG" id="KOG2248">
    <property type="taxonomic scope" value="Eukaryota"/>
</dbReference>
<dbReference type="HOGENOM" id="CLU_022453_4_0_1"/>
<dbReference type="InParanoid" id="Q5B367"/>
<dbReference type="OMA" id="GQCTYHP"/>
<dbReference type="OrthoDB" id="3996471at2759"/>
<dbReference type="Proteomes" id="UP000000560">
    <property type="component" value="Chromosome III"/>
</dbReference>
<dbReference type="GO" id="GO:0005737">
    <property type="term" value="C:cytoplasm"/>
    <property type="evidence" value="ECO:0007669"/>
    <property type="project" value="UniProtKB-SubCell"/>
</dbReference>
<dbReference type="GO" id="GO:0005634">
    <property type="term" value="C:nucleus"/>
    <property type="evidence" value="ECO:0000318"/>
    <property type="project" value="GO_Central"/>
</dbReference>
<dbReference type="GO" id="GO:0004527">
    <property type="term" value="F:exonuclease activity"/>
    <property type="evidence" value="ECO:0000318"/>
    <property type="project" value="GO_Central"/>
</dbReference>
<dbReference type="GO" id="GO:0003676">
    <property type="term" value="F:nucleic acid binding"/>
    <property type="evidence" value="ECO:0007669"/>
    <property type="project" value="InterPro"/>
</dbReference>
<dbReference type="GO" id="GO:0031125">
    <property type="term" value="P:rRNA 3'-end processing"/>
    <property type="evidence" value="ECO:0000318"/>
    <property type="project" value="GO_Central"/>
</dbReference>
<dbReference type="CDD" id="cd06145">
    <property type="entry name" value="REX1_like"/>
    <property type="match status" value="1"/>
</dbReference>
<dbReference type="FunFam" id="3.30.420.10:FF:000109">
    <property type="entry name" value="RNA exonuclease 3"/>
    <property type="match status" value="1"/>
</dbReference>
<dbReference type="Gene3D" id="3.30.420.10">
    <property type="entry name" value="Ribonuclease H-like superfamily/Ribonuclease H"/>
    <property type="match status" value="1"/>
</dbReference>
<dbReference type="InterPro" id="IPR013520">
    <property type="entry name" value="Exonuclease_RNaseT/DNA_pol3"/>
</dbReference>
<dbReference type="InterPro" id="IPR034922">
    <property type="entry name" value="REX1-like_exo"/>
</dbReference>
<dbReference type="InterPro" id="IPR047021">
    <property type="entry name" value="REXO1/3/4-like"/>
</dbReference>
<dbReference type="InterPro" id="IPR012337">
    <property type="entry name" value="RNaseH-like_sf"/>
</dbReference>
<dbReference type="InterPro" id="IPR036397">
    <property type="entry name" value="RNaseH_sf"/>
</dbReference>
<dbReference type="PANTHER" id="PTHR12801:SF112">
    <property type="entry name" value="RNA EXONUCLEASE 3"/>
    <property type="match status" value="1"/>
</dbReference>
<dbReference type="PANTHER" id="PTHR12801">
    <property type="entry name" value="RNA EXONUCLEASE REXO1 / RECO3 FAMILY MEMBER-RELATED"/>
    <property type="match status" value="1"/>
</dbReference>
<dbReference type="SMART" id="SM00479">
    <property type="entry name" value="EXOIII"/>
    <property type="match status" value="1"/>
</dbReference>
<dbReference type="SUPFAM" id="SSF53098">
    <property type="entry name" value="Ribonuclease H-like"/>
    <property type="match status" value="1"/>
</dbReference>